<name>RAB13_RAT</name>
<protein>
    <recommendedName>
        <fullName>Ras-related protein Rab-13</fullName>
        <ecNumber evidence="3">3.6.5.2</ecNumber>
    </recommendedName>
</protein>
<comment type="function">
    <text evidence="7 8 10">The small GTPases Rab are key regulators of intracellular membrane trafficking, from the formation of transport vesicles to their fusion with membranes. Rabs cycle between an inactive GDP-bound form and an active GTP-bound form that is able to recruit to membranes different sets of downstream effectors directly responsible for vesicle formation, movement, tethering and fusion. RAB13 is involved in endocytic recycling and regulates the transport to the plasma membrane of transmembrane proteins like the tight junction protein OCLN/occludin. Thereby, it regulates the assembly and the activity of tight junctions. Moreover, it may also regulate tight junction assembly by activating the PKA signaling pathway and by reorganizing the actin cytoskeleton through the activation of the downstream effectors PRKACA and MICALL2 respectively. Through its role in tight junction assembly, may play a role in the establishment of Sertoli cell barrier. Plays also a role in angiogenesis through regulation of endothelial cells chemotaxis. Also involved in neurite outgrowth. Has also been proposed to play a role in post-Golgi membrane trafficking from the TGN to the recycling endosome. Finally, it has been involved in insulin-induced transport to the plasma membrane of the glucose transporter GLUT4 and therefore may play a role in glucose homeostasis.</text>
</comment>
<comment type="catalytic activity">
    <reaction evidence="1">
        <text>GTP + H2O = GDP + phosphate + H(+)</text>
        <dbReference type="Rhea" id="RHEA:19669"/>
        <dbReference type="ChEBI" id="CHEBI:15377"/>
        <dbReference type="ChEBI" id="CHEBI:15378"/>
        <dbReference type="ChEBI" id="CHEBI:37565"/>
        <dbReference type="ChEBI" id="CHEBI:43474"/>
        <dbReference type="ChEBI" id="CHEBI:58189"/>
        <dbReference type="EC" id="3.6.5.2"/>
    </reaction>
    <physiologicalReaction direction="left-to-right" evidence="1">
        <dbReference type="Rhea" id="RHEA:19670"/>
    </physiologicalReaction>
</comment>
<comment type="cofactor">
    <cofactor evidence="2">
        <name>Mg(2+)</name>
        <dbReference type="ChEBI" id="CHEBI:18420"/>
    </cofactor>
</comment>
<comment type="activity regulation">
    <text evidence="1 8">Regulated by guanine nucleotide exchange factors (GEFs) including DENND1C, which promote the exchange of bound GDP for free GTP. Regulated by GTPase activating proteins (GAPs) which increase the GTP hydrolysis activity. Inhibited by GDP dissociation inhibitors (GDIs) (By similarity). Activated in response to insulin (PubMed:21041651).</text>
</comment>
<comment type="subunit">
    <text evidence="1 10 11">Interacts (GTP-bound form) with MICALL2; competes with RAB8A and is involved in tight junctions assembly. Interacts (GTP-bound form) with MICALL1. Interacts (GTP-bound form) with MICAL1, MICAL3, MICALCL, EHBP1 and EHBP1L1; ternary complexes of RAB8A, RAB13 and either MICAL1 or EHBP1L1 are possible. Interacts with PRKACA; downstream effector of RAB13 involved in tight junction assembly. Interacts with GRB2; may recruit RAB13 to the leading edge of migrating endothelial cells where it can activate RHOA. Interacts (isoprenylated form) with PDE6D; dissociates RAB13 from membranes. Interacts with BICDL2/BICDR2. Interacts with LEPROT and LEPROTL1.</text>
</comment>
<comment type="interaction">
    <interactant intactId="EBI-917332">
        <id>P35286</id>
    </interactant>
    <interactant intactId="EBI-8702651">
        <id>Q6PDU4</id>
        <label>Leprotl1</label>
    </interactant>
    <organismsDiffer>false</organismsDiffer>
    <experiments>3</experiments>
</comment>
<comment type="subcellular location">
    <subcellularLocation>
        <location evidence="1">Cell membrane</location>
        <topology evidence="12">Lipid-anchor</topology>
        <orientation evidence="12">Cytoplasmic side</orientation>
    </subcellularLocation>
    <subcellularLocation>
        <location evidence="1">Cytoplasmic vesicle membrane</location>
        <topology evidence="12">Lipid-anchor</topology>
        <orientation evidence="12">Cytoplasmic side</orientation>
    </subcellularLocation>
    <subcellularLocation>
        <location evidence="1">Cell junction</location>
        <location evidence="1">Tight junction</location>
    </subcellularLocation>
    <subcellularLocation>
        <location evidence="1">Golgi apparatus</location>
        <location evidence="1">trans-Golgi network membrane</location>
    </subcellularLocation>
    <subcellularLocation>
        <location evidence="1">Recycling endosome membrane</location>
    </subcellularLocation>
    <subcellularLocation>
        <location evidence="3">Cell projection</location>
        <location evidence="3">Lamellipodium</location>
    </subcellularLocation>
    <text evidence="1 3">Tight junctions or associated with vesicles scattered throughout the cytoplasm in cells lacking tight junctions (By similarity). Relocalizes to the leading edge of lamellipodia in migrating endothelial cells (By similarity).</text>
</comment>
<comment type="tissue specificity">
    <text evidence="6 9">Highest levels found in lung, kidney, whole brain and spinal cord. Expressed in all tissues tested including Sertoli and germ cells (at protein level). Also detected in osteoclasts.</text>
</comment>
<comment type="domain">
    <text evidence="2">Switch 1, switch 2 and the interswitch regions are characteristic of Rab GTPases and mediate the interactions with Rab downstream effectors. The switch regions undergo conformational changes upon nucleotide binding which drive interaction with specific sets of effector proteins, with most effectors only binding to GTP-bound Rab.</text>
</comment>
<comment type="PTM">
    <text evidence="1">Ubiquitinated via 'Lys-11'-linked ubiquitination on Lys-46 and Lys-58; impairing the recruitment of guanosine diphosphate (GDP) dissociation inhibitor 1/GDI1.</text>
</comment>
<comment type="similarity">
    <text evidence="12">Belongs to the small GTPase superfamily. Rab family.</text>
</comment>
<accession>P35286</accession>
<accession>Q8K3X5</accession>
<evidence type="ECO:0000250" key="1">
    <source>
        <dbReference type="UniProtKB" id="P51153"/>
    </source>
</evidence>
<evidence type="ECO:0000250" key="2">
    <source>
        <dbReference type="UniProtKB" id="P62820"/>
    </source>
</evidence>
<evidence type="ECO:0000250" key="3">
    <source>
        <dbReference type="UniProtKB" id="Q9DD03"/>
    </source>
</evidence>
<evidence type="ECO:0000255" key="4"/>
<evidence type="ECO:0000256" key="5">
    <source>
        <dbReference type="SAM" id="MobiDB-lite"/>
    </source>
</evidence>
<evidence type="ECO:0000269" key="6">
    <source>
    </source>
</evidence>
<evidence type="ECO:0000269" key="7">
    <source>
    </source>
</evidence>
<evidence type="ECO:0000269" key="8">
    <source>
    </source>
</evidence>
<evidence type="ECO:0000269" key="9">
    <source>
    </source>
</evidence>
<evidence type="ECO:0000269" key="10">
    <source>
    </source>
</evidence>
<evidence type="ECO:0000269" key="11">
    <source>
    </source>
</evidence>
<evidence type="ECO:0000305" key="12"/>
<evidence type="ECO:0000312" key="13">
    <source>
        <dbReference type="RGD" id="620880"/>
    </source>
</evidence>
<dbReference type="EC" id="3.6.5.2" evidence="3"/>
<dbReference type="EMBL" id="AF525280">
    <property type="protein sequence ID" value="AAM82588.1"/>
    <property type="molecule type" value="mRNA"/>
</dbReference>
<dbReference type="EMBL" id="M83678">
    <property type="protein sequence ID" value="AAA41993.1"/>
    <property type="molecule type" value="mRNA"/>
</dbReference>
<dbReference type="PIR" id="D42148">
    <property type="entry name" value="D42148"/>
</dbReference>
<dbReference type="RefSeq" id="NP_112354.1">
    <property type="nucleotide sequence ID" value="NM_031092.2"/>
</dbReference>
<dbReference type="SMR" id="P35286"/>
<dbReference type="FunCoup" id="P35286">
    <property type="interactions" value="1095"/>
</dbReference>
<dbReference type="IntAct" id="P35286">
    <property type="interactions" value="4"/>
</dbReference>
<dbReference type="MINT" id="P35286"/>
<dbReference type="STRING" id="10116.ENSRNOP00000071741"/>
<dbReference type="iPTMnet" id="P35286"/>
<dbReference type="PhosphoSitePlus" id="P35286"/>
<dbReference type="jPOST" id="P35286"/>
<dbReference type="PaxDb" id="10116-ENSRNOP00000022626"/>
<dbReference type="GeneID" id="81756"/>
<dbReference type="KEGG" id="rno:81756"/>
<dbReference type="UCSC" id="RGD:620880">
    <property type="organism name" value="rat"/>
</dbReference>
<dbReference type="AGR" id="RGD:620880"/>
<dbReference type="CTD" id="5872"/>
<dbReference type="RGD" id="620880">
    <property type="gene designation" value="Rab13"/>
</dbReference>
<dbReference type="VEuPathDB" id="HostDB:ENSRNOG00000016733"/>
<dbReference type="eggNOG" id="KOG0078">
    <property type="taxonomic scope" value="Eukaryota"/>
</dbReference>
<dbReference type="HOGENOM" id="CLU_041217_10_7_1"/>
<dbReference type="InParanoid" id="P35286"/>
<dbReference type="OrthoDB" id="37757at9989"/>
<dbReference type="PhylomeDB" id="P35286"/>
<dbReference type="TreeFam" id="TF314097"/>
<dbReference type="Reactome" id="R-RNO-8873719">
    <property type="pathway name" value="RAB geranylgeranylation"/>
</dbReference>
<dbReference type="Reactome" id="R-RNO-8876198">
    <property type="pathway name" value="RAB GEFs exchange GTP for GDP on RABs"/>
</dbReference>
<dbReference type="PRO" id="PR:P35286"/>
<dbReference type="Proteomes" id="UP000002494">
    <property type="component" value="Chromosome 2"/>
</dbReference>
<dbReference type="Bgee" id="ENSRNOG00000016733">
    <property type="expression patterns" value="Expressed in ovary and 20 other cell types or tissues"/>
</dbReference>
<dbReference type="ExpressionAtlas" id="P35286">
    <property type="expression patterns" value="baseline and differential"/>
</dbReference>
<dbReference type="GO" id="GO:0005923">
    <property type="term" value="C:bicellular tight junction"/>
    <property type="evidence" value="ECO:0000250"/>
    <property type="project" value="UniProtKB"/>
</dbReference>
<dbReference type="GO" id="GO:0005911">
    <property type="term" value="C:cell-cell junction"/>
    <property type="evidence" value="ECO:0000266"/>
    <property type="project" value="RGD"/>
</dbReference>
<dbReference type="GO" id="GO:0031410">
    <property type="term" value="C:cytoplasmic vesicle"/>
    <property type="evidence" value="ECO:0000266"/>
    <property type="project" value="RGD"/>
</dbReference>
<dbReference type="GO" id="GO:0030659">
    <property type="term" value="C:cytoplasmic vesicle membrane"/>
    <property type="evidence" value="ECO:0000304"/>
    <property type="project" value="Reactome"/>
</dbReference>
<dbReference type="GO" id="GO:0030139">
    <property type="term" value="C:endocytic vesicle"/>
    <property type="evidence" value="ECO:0000250"/>
    <property type="project" value="UniProtKB"/>
</dbReference>
<dbReference type="GO" id="GO:0005768">
    <property type="term" value="C:endosome"/>
    <property type="evidence" value="ECO:0000318"/>
    <property type="project" value="GO_Central"/>
</dbReference>
<dbReference type="GO" id="GO:0005794">
    <property type="term" value="C:Golgi apparatus"/>
    <property type="evidence" value="ECO:0000266"/>
    <property type="project" value="RGD"/>
</dbReference>
<dbReference type="GO" id="GO:0032593">
    <property type="term" value="C:insulin-responsive compartment"/>
    <property type="evidence" value="ECO:0000314"/>
    <property type="project" value="UniProtKB"/>
</dbReference>
<dbReference type="GO" id="GO:0030027">
    <property type="term" value="C:lamellipodium"/>
    <property type="evidence" value="ECO:0000250"/>
    <property type="project" value="UniProtKB"/>
</dbReference>
<dbReference type="GO" id="GO:0016328">
    <property type="term" value="C:lateral plasma membrane"/>
    <property type="evidence" value="ECO:0000250"/>
    <property type="project" value="UniProtKB"/>
</dbReference>
<dbReference type="GO" id="GO:0043005">
    <property type="term" value="C:neuron projection"/>
    <property type="evidence" value="ECO:0000250"/>
    <property type="project" value="UniProtKB"/>
</dbReference>
<dbReference type="GO" id="GO:0005886">
    <property type="term" value="C:plasma membrane"/>
    <property type="evidence" value="ECO:0000250"/>
    <property type="project" value="UniProtKB"/>
</dbReference>
<dbReference type="GO" id="GO:0055037">
    <property type="term" value="C:recycling endosome"/>
    <property type="evidence" value="ECO:0000250"/>
    <property type="project" value="UniProtKB"/>
</dbReference>
<dbReference type="GO" id="GO:0055038">
    <property type="term" value="C:recycling endosome membrane"/>
    <property type="evidence" value="ECO:0007669"/>
    <property type="project" value="UniProtKB-SubCell"/>
</dbReference>
<dbReference type="GO" id="GO:0008021">
    <property type="term" value="C:synaptic vesicle"/>
    <property type="evidence" value="ECO:0000318"/>
    <property type="project" value="GO_Central"/>
</dbReference>
<dbReference type="GO" id="GO:0005802">
    <property type="term" value="C:trans-Golgi network"/>
    <property type="evidence" value="ECO:0000250"/>
    <property type="project" value="UniProtKB"/>
</dbReference>
<dbReference type="GO" id="GO:0030140">
    <property type="term" value="C:trans-Golgi network transport vesicle"/>
    <property type="evidence" value="ECO:0000318"/>
    <property type="project" value="GO_Central"/>
</dbReference>
<dbReference type="GO" id="GO:0005525">
    <property type="term" value="F:GTP binding"/>
    <property type="evidence" value="ECO:0000250"/>
    <property type="project" value="UniProtKB"/>
</dbReference>
<dbReference type="GO" id="GO:0003924">
    <property type="term" value="F:GTPase activity"/>
    <property type="evidence" value="ECO:0000266"/>
    <property type="project" value="RGD"/>
</dbReference>
<dbReference type="GO" id="GO:0034236">
    <property type="term" value="F:protein kinase A catalytic subunit binding"/>
    <property type="evidence" value="ECO:0000353"/>
    <property type="project" value="UniProtKB"/>
</dbReference>
<dbReference type="GO" id="GO:0070830">
    <property type="term" value="P:bicellular tight junction assembly"/>
    <property type="evidence" value="ECO:0000250"/>
    <property type="project" value="UniProtKB"/>
</dbReference>
<dbReference type="GO" id="GO:0032869">
    <property type="term" value="P:cellular response to insulin stimulus"/>
    <property type="evidence" value="ECO:0000315"/>
    <property type="project" value="UniProtKB"/>
</dbReference>
<dbReference type="GO" id="GO:0030866">
    <property type="term" value="P:cortical actin cytoskeleton organization"/>
    <property type="evidence" value="ECO:0000315"/>
    <property type="project" value="UniProtKB"/>
</dbReference>
<dbReference type="GO" id="GO:0032456">
    <property type="term" value="P:endocytic recycling"/>
    <property type="evidence" value="ECO:0000250"/>
    <property type="project" value="UniProtKB"/>
</dbReference>
<dbReference type="GO" id="GO:0016197">
    <property type="term" value="P:endosomal transport"/>
    <property type="evidence" value="ECO:0000250"/>
    <property type="project" value="UniProtKB"/>
</dbReference>
<dbReference type="GO" id="GO:0035767">
    <property type="term" value="P:endothelial cell chemotaxis"/>
    <property type="evidence" value="ECO:0000250"/>
    <property type="project" value="UniProtKB"/>
</dbReference>
<dbReference type="GO" id="GO:0097368">
    <property type="term" value="P:establishment of Sertoli cell barrier"/>
    <property type="evidence" value="ECO:0000315"/>
    <property type="project" value="UniProtKB"/>
</dbReference>
<dbReference type="GO" id="GO:0006887">
    <property type="term" value="P:exocytosis"/>
    <property type="evidence" value="ECO:0000318"/>
    <property type="project" value="GO_Central"/>
</dbReference>
<dbReference type="GO" id="GO:0042593">
    <property type="term" value="P:glucose homeostasis"/>
    <property type="evidence" value="ECO:0000305"/>
    <property type="project" value="UniProtKB"/>
</dbReference>
<dbReference type="GO" id="GO:0006893">
    <property type="term" value="P:Golgi to plasma membrane transport"/>
    <property type="evidence" value="ECO:0000266"/>
    <property type="project" value="RGD"/>
</dbReference>
<dbReference type="GO" id="GO:0031175">
    <property type="term" value="P:neuron projection development"/>
    <property type="evidence" value="ECO:0000315"/>
    <property type="project" value="UniProtKB"/>
</dbReference>
<dbReference type="GO" id="GO:0046326">
    <property type="term" value="P:positive regulation of D-glucose import"/>
    <property type="evidence" value="ECO:0000305"/>
    <property type="project" value="UniProtKB"/>
</dbReference>
<dbReference type="GO" id="GO:0010737">
    <property type="term" value="P:protein kinase A signaling"/>
    <property type="evidence" value="ECO:0000315"/>
    <property type="project" value="UniProtKB"/>
</dbReference>
<dbReference type="GO" id="GO:1902463">
    <property type="term" value="P:protein localization to cell leading edge"/>
    <property type="evidence" value="ECO:0000250"/>
    <property type="project" value="UniProtKB"/>
</dbReference>
<dbReference type="GO" id="GO:0072659">
    <property type="term" value="P:protein localization to plasma membrane"/>
    <property type="evidence" value="ECO:0000314"/>
    <property type="project" value="UniProtKB"/>
</dbReference>
<dbReference type="GO" id="GO:0015031">
    <property type="term" value="P:protein transport"/>
    <property type="evidence" value="ECO:0007669"/>
    <property type="project" value="UniProtKB-KW"/>
</dbReference>
<dbReference type="GO" id="GO:0044795">
    <property type="term" value="P:trans-Golgi network to recycling endosome transport"/>
    <property type="evidence" value="ECO:0000250"/>
    <property type="project" value="UniProtKB"/>
</dbReference>
<dbReference type="CDD" id="cd01867">
    <property type="entry name" value="Rab8_Rab10_Rab13_like"/>
    <property type="match status" value="1"/>
</dbReference>
<dbReference type="FunFam" id="3.40.50.300:FF:000363">
    <property type="entry name" value="Secretion related GTPase srgA"/>
    <property type="match status" value="1"/>
</dbReference>
<dbReference type="Gene3D" id="3.40.50.300">
    <property type="entry name" value="P-loop containing nucleotide triphosphate hydrolases"/>
    <property type="match status" value="1"/>
</dbReference>
<dbReference type="InterPro" id="IPR027417">
    <property type="entry name" value="P-loop_NTPase"/>
</dbReference>
<dbReference type="InterPro" id="IPR005225">
    <property type="entry name" value="Small_GTP-bd"/>
</dbReference>
<dbReference type="InterPro" id="IPR001806">
    <property type="entry name" value="Small_GTPase"/>
</dbReference>
<dbReference type="InterPro" id="IPR050305">
    <property type="entry name" value="Small_GTPase_Rab"/>
</dbReference>
<dbReference type="NCBIfam" id="TIGR00231">
    <property type="entry name" value="small_GTP"/>
    <property type="match status" value="1"/>
</dbReference>
<dbReference type="PANTHER" id="PTHR47980">
    <property type="entry name" value="LD44762P"/>
    <property type="match status" value="1"/>
</dbReference>
<dbReference type="Pfam" id="PF00071">
    <property type="entry name" value="Ras"/>
    <property type="match status" value="1"/>
</dbReference>
<dbReference type="PRINTS" id="PR00449">
    <property type="entry name" value="RASTRNSFRMNG"/>
</dbReference>
<dbReference type="SMART" id="SM00177">
    <property type="entry name" value="ARF"/>
    <property type="match status" value="1"/>
</dbReference>
<dbReference type="SMART" id="SM00175">
    <property type="entry name" value="RAB"/>
    <property type="match status" value="1"/>
</dbReference>
<dbReference type="SMART" id="SM00176">
    <property type="entry name" value="RAN"/>
    <property type="match status" value="1"/>
</dbReference>
<dbReference type="SMART" id="SM00173">
    <property type="entry name" value="RAS"/>
    <property type="match status" value="1"/>
</dbReference>
<dbReference type="SMART" id="SM00174">
    <property type="entry name" value="RHO"/>
    <property type="match status" value="1"/>
</dbReference>
<dbReference type="SUPFAM" id="SSF52540">
    <property type="entry name" value="P-loop containing nucleoside triphosphate hydrolases"/>
    <property type="match status" value="1"/>
</dbReference>
<dbReference type="PROSITE" id="PS51419">
    <property type="entry name" value="RAB"/>
    <property type="match status" value="1"/>
</dbReference>
<feature type="chain" id="PRO_0000121184" description="Ras-related protein Rab-13">
    <location>
        <begin position="1"/>
        <end position="200"/>
    </location>
</feature>
<feature type="propeptide" id="PRO_0000370759" description="Removed in mature form" evidence="4">
    <location>
        <begin position="201"/>
        <end position="203"/>
    </location>
</feature>
<feature type="region of interest" description="Disordered" evidence="5">
    <location>
        <begin position="173"/>
        <end position="203"/>
    </location>
</feature>
<feature type="short sequence motif" description="Switch 1" evidence="2">
    <location>
        <begin position="31"/>
        <end position="45"/>
    </location>
</feature>
<feature type="short sequence motif" description="Switch 2" evidence="2">
    <location>
        <begin position="63"/>
        <end position="80"/>
    </location>
</feature>
<feature type="compositionally biased region" description="Polar residues" evidence="5">
    <location>
        <begin position="178"/>
        <end position="189"/>
    </location>
</feature>
<feature type="binding site" evidence="2">
    <location>
        <position position="17"/>
    </location>
    <ligand>
        <name>GTP</name>
        <dbReference type="ChEBI" id="CHEBI:37565"/>
    </ligand>
</feature>
<feature type="binding site" evidence="2">
    <location>
        <position position="18"/>
    </location>
    <ligand>
        <name>GTP</name>
        <dbReference type="ChEBI" id="CHEBI:37565"/>
    </ligand>
</feature>
<feature type="binding site" evidence="2">
    <location>
        <position position="20"/>
    </location>
    <ligand>
        <name>GTP</name>
        <dbReference type="ChEBI" id="CHEBI:37565"/>
    </ligand>
</feature>
<feature type="binding site" evidence="2">
    <location>
        <position position="21"/>
    </location>
    <ligand>
        <name>GTP</name>
        <dbReference type="ChEBI" id="CHEBI:37565"/>
    </ligand>
</feature>
<feature type="binding site" evidence="2">
    <location>
        <position position="22"/>
    </location>
    <ligand>
        <name>GTP</name>
        <dbReference type="ChEBI" id="CHEBI:37565"/>
    </ligand>
</feature>
<feature type="binding site" evidence="2">
    <location>
        <position position="22"/>
    </location>
    <ligand>
        <name>Mg(2+)</name>
        <dbReference type="ChEBI" id="CHEBI:18420"/>
    </ligand>
</feature>
<feature type="binding site" evidence="2">
    <location>
        <position position="23"/>
    </location>
    <ligand>
        <name>GTP</name>
        <dbReference type="ChEBI" id="CHEBI:37565"/>
    </ligand>
</feature>
<feature type="binding site" evidence="2">
    <location>
        <position position="40"/>
    </location>
    <ligand>
        <name>GTP</name>
        <dbReference type="ChEBI" id="CHEBI:37565"/>
    </ligand>
</feature>
<feature type="binding site" evidence="2">
    <location>
        <position position="40"/>
    </location>
    <ligand>
        <name>Mg(2+)</name>
        <dbReference type="ChEBI" id="CHEBI:18420"/>
    </ligand>
</feature>
<feature type="binding site" evidence="2">
    <location>
        <position position="63"/>
    </location>
    <ligand>
        <name>Mg(2+)</name>
        <dbReference type="ChEBI" id="CHEBI:18420"/>
    </ligand>
</feature>
<feature type="binding site" evidence="2">
    <location>
        <position position="66"/>
    </location>
    <ligand>
        <name>GTP</name>
        <dbReference type="ChEBI" id="CHEBI:37565"/>
    </ligand>
</feature>
<feature type="binding site" evidence="2">
    <location>
        <position position="121"/>
    </location>
    <ligand>
        <name>GTP</name>
        <dbReference type="ChEBI" id="CHEBI:37565"/>
    </ligand>
</feature>
<feature type="binding site" evidence="2">
    <location>
        <position position="122"/>
    </location>
    <ligand>
        <name>GTP</name>
        <dbReference type="ChEBI" id="CHEBI:37565"/>
    </ligand>
</feature>
<feature type="binding site" evidence="2">
    <location>
        <position position="124"/>
    </location>
    <ligand>
        <name>GTP</name>
        <dbReference type="ChEBI" id="CHEBI:37565"/>
    </ligand>
</feature>
<feature type="binding site" evidence="2">
    <location>
        <position position="152"/>
    </location>
    <ligand>
        <name>GTP</name>
        <dbReference type="ChEBI" id="CHEBI:37565"/>
    </ligand>
</feature>
<feature type="binding site" evidence="2">
    <location>
        <position position="153"/>
    </location>
    <ligand>
        <name>GTP</name>
        <dbReference type="ChEBI" id="CHEBI:37565"/>
    </ligand>
</feature>
<feature type="modified residue" description="Phosphoserine" evidence="1">
    <location>
        <position position="178"/>
    </location>
</feature>
<feature type="modified residue" description="Cysteine methyl ester" evidence="4">
    <location>
        <position position="200"/>
    </location>
</feature>
<feature type="lipid moiety-binding region" description="S-geranylgeranyl cysteine" evidence="1">
    <location>
        <position position="200"/>
    </location>
</feature>
<feature type="cross-link" description="Glycyl lysine isopeptide (Lys-Gly) (interchain with G-Cter in ubiquitin)" evidence="1">
    <location>
        <position position="46"/>
    </location>
</feature>
<feature type="cross-link" description="Glycyl lysine isopeptide (Lys-Gly) (interchain with G-Cter in ubiquitin)" evidence="1">
    <location>
        <position position="58"/>
    </location>
</feature>
<feature type="sequence conflict" description="In Ref. 2; AAA41993." evidence="12" ref="2">
    <original>A</original>
    <variation>S</variation>
    <location>
        <position position="76"/>
    </location>
</feature>
<feature type="sequence conflict" description="In Ref. 2; AAA41993." evidence="12" ref="2">
    <original>G</original>
    <variation>E</variation>
    <location>
        <position position="113"/>
    </location>
</feature>
<sequence length="203" mass="22901">MAKAYDHLFKLLLIGDSGVGKTCLIIRFAEDNFNSTYISTIGIDFKIRTVEIEGKRIKLQVWDTAGQERFKTITTAYYRGAMGIILVYDITDEKSFENIQNWMKSIKENASAGVERLLLGNKCDMEAKRKVQREQAERLAREHRIRFFETSAKSSVNVDEAFSSLARDILLKTGGRRSGNSSKPSSTDLKVSDKKNSNKCSLG</sequence>
<reference key="1">
    <citation type="journal article" date="2009" name="Biol. Reprod.">
        <title>RAB13 participates in ectoplasmic specialization dynamics in the rat testis.</title>
        <authorList>
            <person name="Mruk D.D."/>
            <person name="Lau A.S."/>
        </authorList>
    </citation>
    <scope>NUCLEOTIDE SEQUENCE [MRNA]</scope>
    <scope>TISSUE SPECIFICITY</scope>
    <source>
        <strain>Sprague-Dawley</strain>
    </source>
</reference>
<reference key="2">
    <citation type="journal article" date="1992" name="J. Biol. Chem.">
        <title>Rab15, a novel low molecular weight GTP-binding protein specifically expressed in rat brain.</title>
        <authorList>
            <person name="Elferink L.A."/>
            <person name="Anzai K."/>
            <person name="Scheller R.H."/>
        </authorList>
    </citation>
    <scope>NUCLEOTIDE SEQUENCE [MRNA] OF 40-203</scope>
    <source>
        <strain>Sprague-Dawley</strain>
        <tissue>Brain</tissue>
    </source>
</reference>
<reference key="3">
    <citation type="journal article" date="2010" name="Mol. Cell. Biol.">
        <title>Rab13 regulates neurite outgrowth in PC12 cells through its effector protein, JRAB/MICAL-L2.</title>
        <authorList>
            <person name="Sakane A."/>
            <person name="Honda K."/>
            <person name="Sasaki T."/>
        </authorList>
    </citation>
    <scope>FUNCTION IN NEURITE OUTGROWTH</scope>
</reference>
<reference key="4">
    <citation type="journal article" date="2010" name="Proc. Natl. Acad. Sci. U.S.A.">
        <title>Rab8A and Rab13 are activated by insulin and regulate GLUT4 translocation in muscle cells.</title>
        <authorList>
            <person name="Sun Y."/>
            <person name="Bilan P.J."/>
            <person name="Liu Z."/>
            <person name="Klip A."/>
        </authorList>
    </citation>
    <scope>FUNCTION IN EXOCYTOSIS</scope>
    <scope>ACTIVITY REGULATION</scope>
</reference>
<reference key="5">
    <citation type="journal article" date="2012" name="J. Histochem. Cytochem.">
        <title>Rab13 is upregulated during osteoclast differentiation and associates with small vesicles revealing polarized distribution in resorbing cells.</title>
        <authorList>
            <person name="Hirvonen M.J."/>
            <person name="Mulari M.T."/>
            <person name="Bueki K.G."/>
            <person name="Vihko P."/>
            <person name="Haerkoenen P.L."/>
            <person name="Vaeaenaenen H.K."/>
        </authorList>
    </citation>
    <scope>TISSUE SPECIFICITY</scope>
</reference>
<reference key="6">
    <citation type="journal article" date="2013" name="FEBS Open Bio">
        <title>Novel interaction of Rab13 and Rab8 with endospanins.</title>
        <authorList>
            <person name="Hirvonen M.J."/>
            <person name="Bueki K.G."/>
            <person name="Sun Y."/>
            <person name="Mulari M.T."/>
            <person name="Haerkoenen P.L."/>
            <person name="Vaeaenaenen K.H."/>
        </authorList>
    </citation>
    <scope>INTERACTION WITH LEPROT AND LEPROTL1</scope>
</reference>
<reference key="7">
    <citation type="journal article" date="2013" name="J. Mol. Endocrinol.">
        <title>RAB13 regulates Sertoli cell permeability barrier dynamics through protein kinase A.</title>
        <authorList>
            <person name="Su W."/>
            <person name="Liu X."/>
        </authorList>
    </citation>
    <scope>FUNCTION</scope>
    <scope>INTERACTION WITH PRKACA</scope>
</reference>
<proteinExistence type="evidence at protein level"/>
<gene>
    <name evidence="13" type="primary">Rab13</name>
</gene>
<organism>
    <name type="scientific">Rattus norvegicus</name>
    <name type="common">Rat</name>
    <dbReference type="NCBI Taxonomy" id="10116"/>
    <lineage>
        <taxon>Eukaryota</taxon>
        <taxon>Metazoa</taxon>
        <taxon>Chordata</taxon>
        <taxon>Craniata</taxon>
        <taxon>Vertebrata</taxon>
        <taxon>Euteleostomi</taxon>
        <taxon>Mammalia</taxon>
        <taxon>Eutheria</taxon>
        <taxon>Euarchontoglires</taxon>
        <taxon>Glires</taxon>
        <taxon>Rodentia</taxon>
        <taxon>Myomorpha</taxon>
        <taxon>Muroidea</taxon>
        <taxon>Muridae</taxon>
        <taxon>Murinae</taxon>
        <taxon>Rattus</taxon>
    </lineage>
</organism>
<keyword id="KW-0965">Cell junction</keyword>
<keyword id="KW-1003">Cell membrane</keyword>
<keyword id="KW-0966">Cell projection</keyword>
<keyword id="KW-0968">Cytoplasmic vesicle</keyword>
<keyword id="KW-0967">Endosome</keyword>
<keyword id="KW-0333">Golgi apparatus</keyword>
<keyword id="KW-0342">GTP-binding</keyword>
<keyword id="KW-0378">Hydrolase</keyword>
<keyword id="KW-1017">Isopeptide bond</keyword>
<keyword id="KW-0449">Lipoprotein</keyword>
<keyword id="KW-0460">Magnesium</keyword>
<keyword id="KW-0472">Membrane</keyword>
<keyword id="KW-0479">Metal-binding</keyword>
<keyword id="KW-0488">Methylation</keyword>
<keyword id="KW-0547">Nucleotide-binding</keyword>
<keyword id="KW-0597">Phosphoprotein</keyword>
<keyword id="KW-0636">Prenylation</keyword>
<keyword id="KW-0653">Protein transport</keyword>
<keyword id="KW-1185">Reference proteome</keyword>
<keyword id="KW-0796">Tight junction</keyword>
<keyword id="KW-0813">Transport</keyword>
<keyword id="KW-0832">Ubl conjugation</keyword>